<sequence>MQPVVETLSGLERRVDLAVSVAEVEKEVQAQLKRVGRTAKVAGFRPGKAPLAMLERSHGPGIRYDVINSLVGRAFEQAVDGAKLRVAGSPTLTPKTEGVADDTLAFTATFEVYPEVTVPDLSALAVTRYDTPVTDAEVNQTLDVLRKQRAKFETREGRASQDGDRVVLDFAGTIDGVPFEGGKAEDFPFVLGQGRMLPEFEEAALGLKAGESKVFPLKFPDDYQGKEVAGKTAEFTVTVKEVAEGVLPEVDAEFAKSLGQAEGDVEKLKADIRTNIEREVKARLQGRTKGSVMDALVEAGKFDVPKALVDSDVEGRIAAAREELKQRGVPNADSVPMPAEVFSTESERRVRLGLLVSELVKQAQLQAKPEQVRARIEEFAQNYEQPAQVVSYYLADRQRRAEIEAIVLEDNVVAHVLENAKVADEKVPFDQLMGMA</sequence>
<proteinExistence type="inferred from homology"/>
<comment type="function">
    <text evidence="1">Involved in protein export. Acts as a chaperone by maintaining the newly synthesized protein in an open conformation. Functions as a peptidyl-prolyl cis-trans isomerase.</text>
</comment>
<comment type="catalytic activity">
    <reaction evidence="1">
        <text>[protein]-peptidylproline (omega=180) = [protein]-peptidylproline (omega=0)</text>
        <dbReference type="Rhea" id="RHEA:16237"/>
        <dbReference type="Rhea" id="RHEA-COMP:10747"/>
        <dbReference type="Rhea" id="RHEA-COMP:10748"/>
        <dbReference type="ChEBI" id="CHEBI:83833"/>
        <dbReference type="ChEBI" id="CHEBI:83834"/>
        <dbReference type="EC" id="5.2.1.8"/>
    </reaction>
</comment>
<comment type="subcellular location">
    <subcellularLocation>
        <location>Cytoplasm</location>
    </subcellularLocation>
    <text evidence="1">About half TF is bound to the ribosome near the polypeptide exit tunnel while the other half is free in the cytoplasm.</text>
</comment>
<comment type="domain">
    <text evidence="1">Consists of 3 domains; the N-terminus binds the ribosome, the middle domain has PPIase activity, while the C-terminus has intrinsic chaperone activity on its own.</text>
</comment>
<comment type="similarity">
    <text evidence="1">Belongs to the FKBP-type PPIase family. Tig subfamily.</text>
</comment>
<accession>Q7W8X3</accession>
<name>TIG_BORPA</name>
<feature type="chain" id="PRO_0000179321" description="Trigger factor">
    <location>
        <begin position="1"/>
        <end position="436"/>
    </location>
</feature>
<feature type="domain" description="PPIase FKBP-type" evidence="1">
    <location>
        <begin position="163"/>
        <end position="248"/>
    </location>
</feature>
<dbReference type="EC" id="5.2.1.8" evidence="1"/>
<dbReference type="EMBL" id="BX640429">
    <property type="protein sequence ID" value="CAE37305.1"/>
    <property type="molecule type" value="Genomic_DNA"/>
</dbReference>
<dbReference type="RefSeq" id="WP_010928315.1">
    <property type="nucleotide sequence ID" value="NC_002928.3"/>
</dbReference>
<dbReference type="SMR" id="Q7W8X3"/>
<dbReference type="GeneID" id="93203779"/>
<dbReference type="KEGG" id="bpa:BPP2005"/>
<dbReference type="HOGENOM" id="CLU_033058_2_0_4"/>
<dbReference type="Proteomes" id="UP000001421">
    <property type="component" value="Chromosome"/>
</dbReference>
<dbReference type="GO" id="GO:0005737">
    <property type="term" value="C:cytoplasm"/>
    <property type="evidence" value="ECO:0007669"/>
    <property type="project" value="UniProtKB-SubCell"/>
</dbReference>
<dbReference type="GO" id="GO:0003755">
    <property type="term" value="F:peptidyl-prolyl cis-trans isomerase activity"/>
    <property type="evidence" value="ECO:0007669"/>
    <property type="project" value="UniProtKB-UniRule"/>
</dbReference>
<dbReference type="GO" id="GO:0044183">
    <property type="term" value="F:protein folding chaperone"/>
    <property type="evidence" value="ECO:0007669"/>
    <property type="project" value="TreeGrafter"/>
</dbReference>
<dbReference type="GO" id="GO:0043022">
    <property type="term" value="F:ribosome binding"/>
    <property type="evidence" value="ECO:0007669"/>
    <property type="project" value="TreeGrafter"/>
</dbReference>
<dbReference type="GO" id="GO:0051083">
    <property type="term" value="P:'de novo' cotranslational protein folding"/>
    <property type="evidence" value="ECO:0007669"/>
    <property type="project" value="TreeGrafter"/>
</dbReference>
<dbReference type="GO" id="GO:0051301">
    <property type="term" value="P:cell division"/>
    <property type="evidence" value="ECO:0007669"/>
    <property type="project" value="UniProtKB-KW"/>
</dbReference>
<dbReference type="GO" id="GO:0061077">
    <property type="term" value="P:chaperone-mediated protein folding"/>
    <property type="evidence" value="ECO:0007669"/>
    <property type="project" value="TreeGrafter"/>
</dbReference>
<dbReference type="GO" id="GO:0015031">
    <property type="term" value="P:protein transport"/>
    <property type="evidence" value="ECO:0007669"/>
    <property type="project" value="UniProtKB-UniRule"/>
</dbReference>
<dbReference type="GO" id="GO:0043335">
    <property type="term" value="P:protein unfolding"/>
    <property type="evidence" value="ECO:0007669"/>
    <property type="project" value="TreeGrafter"/>
</dbReference>
<dbReference type="FunFam" id="3.10.50.40:FF:000001">
    <property type="entry name" value="Trigger factor"/>
    <property type="match status" value="1"/>
</dbReference>
<dbReference type="Gene3D" id="3.10.50.40">
    <property type="match status" value="1"/>
</dbReference>
<dbReference type="Gene3D" id="3.30.70.1050">
    <property type="entry name" value="Trigger factor ribosome-binding domain"/>
    <property type="match status" value="1"/>
</dbReference>
<dbReference type="Gene3D" id="1.10.3120.10">
    <property type="entry name" value="Trigger factor, C-terminal domain"/>
    <property type="match status" value="1"/>
</dbReference>
<dbReference type="HAMAP" id="MF_00303">
    <property type="entry name" value="Trigger_factor_Tig"/>
    <property type="match status" value="1"/>
</dbReference>
<dbReference type="InterPro" id="IPR046357">
    <property type="entry name" value="PPIase_dom_sf"/>
</dbReference>
<dbReference type="InterPro" id="IPR001179">
    <property type="entry name" value="PPIase_FKBP_dom"/>
</dbReference>
<dbReference type="InterPro" id="IPR005215">
    <property type="entry name" value="Trig_fac"/>
</dbReference>
<dbReference type="InterPro" id="IPR008880">
    <property type="entry name" value="Trigger_fac_C"/>
</dbReference>
<dbReference type="InterPro" id="IPR037041">
    <property type="entry name" value="Trigger_fac_C_sf"/>
</dbReference>
<dbReference type="InterPro" id="IPR008881">
    <property type="entry name" value="Trigger_fac_ribosome-bd_bac"/>
</dbReference>
<dbReference type="InterPro" id="IPR036611">
    <property type="entry name" value="Trigger_fac_ribosome-bd_sf"/>
</dbReference>
<dbReference type="InterPro" id="IPR027304">
    <property type="entry name" value="Trigger_fact/SurA_dom_sf"/>
</dbReference>
<dbReference type="NCBIfam" id="TIGR00115">
    <property type="entry name" value="tig"/>
    <property type="match status" value="1"/>
</dbReference>
<dbReference type="PANTHER" id="PTHR30560">
    <property type="entry name" value="TRIGGER FACTOR CHAPERONE AND PEPTIDYL-PROLYL CIS/TRANS ISOMERASE"/>
    <property type="match status" value="1"/>
</dbReference>
<dbReference type="PANTHER" id="PTHR30560:SF3">
    <property type="entry name" value="TRIGGER FACTOR-LIKE PROTEIN TIG, CHLOROPLASTIC"/>
    <property type="match status" value="1"/>
</dbReference>
<dbReference type="Pfam" id="PF00254">
    <property type="entry name" value="FKBP_C"/>
    <property type="match status" value="1"/>
</dbReference>
<dbReference type="Pfam" id="PF05698">
    <property type="entry name" value="Trigger_C"/>
    <property type="match status" value="1"/>
</dbReference>
<dbReference type="Pfam" id="PF05697">
    <property type="entry name" value="Trigger_N"/>
    <property type="match status" value="1"/>
</dbReference>
<dbReference type="PIRSF" id="PIRSF003095">
    <property type="entry name" value="Trigger_factor"/>
    <property type="match status" value="1"/>
</dbReference>
<dbReference type="SUPFAM" id="SSF54534">
    <property type="entry name" value="FKBP-like"/>
    <property type="match status" value="1"/>
</dbReference>
<dbReference type="SUPFAM" id="SSF109998">
    <property type="entry name" value="Triger factor/SurA peptide-binding domain-like"/>
    <property type="match status" value="1"/>
</dbReference>
<dbReference type="SUPFAM" id="SSF102735">
    <property type="entry name" value="Trigger factor ribosome-binding domain"/>
    <property type="match status" value="1"/>
</dbReference>
<dbReference type="PROSITE" id="PS50059">
    <property type="entry name" value="FKBP_PPIASE"/>
    <property type="match status" value="1"/>
</dbReference>
<reference key="1">
    <citation type="journal article" date="2003" name="Nat. Genet.">
        <title>Comparative analysis of the genome sequences of Bordetella pertussis, Bordetella parapertussis and Bordetella bronchiseptica.</title>
        <authorList>
            <person name="Parkhill J."/>
            <person name="Sebaihia M."/>
            <person name="Preston A."/>
            <person name="Murphy L.D."/>
            <person name="Thomson N.R."/>
            <person name="Harris D.E."/>
            <person name="Holden M.T.G."/>
            <person name="Churcher C.M."/>
            <person name="Bentley S.D."/>
            <person name="Mungall K.L."/>
            <person name="Cerdeno-Tarraga A.-M."/>
            <person name="Temple L."/>
            <person name="James K.D."/>
            <person name="Harris B."/>
            <person name="Quail M.A."/>
            <person name="Achtman M."/>
            <person name="Atkin R."/>
            <person name="Baker S."/>
            <person name="Basham D."/>
            <person name="Bason N."/>
            <person name="Cherevach I."/>
            <person name="Chillingworth T."/>
            <person name="Collins M."/>
            <person name="Cronin A."/>
            <person name="Davis P."/>
            <person name="Doggett J."/>
            <person name="Feltwell T."/>
            <person name="Goble A."/>
            <person name="Hamlin N."/>
            <person name="Hauser H."/>
            <person name="Holroyd S."/>
            <person name="Jagels K."/>
            <person name="Leather S."/>
            <person name="Moule S."/>
            <person name="Norberczak H."/>
            <person name="O'Neil S."/>
            <person name="Ormond D."/>
            <person name="Price C."/>
            <person name="Rabbinowitsch E."/>
            <person name="Rutter S."/>
            <person name="Sanders M."/>
            <person name="Saunders D."/>
            <person name="Seeger K."/>
            <person name="Sharp S."/>
            <person name="Simmonds M."/>
            <person name="Skelton J."/>
            <person name="Squares R."/>
            <person name="Squares S."/>
            <person name="Stevens K."/>
            <person name="Unwin L."/>
            <person name="Whitehead S."/>
            <person name="Barrell B.G."/>
            <person name="Maskell D.J."/>
        </authorList>
    </citation>
    <scope>NUCLEOTIDE SEQUENCE [LARGE SCALE GENOMIC DNA]</scope>
    <source>
        <strain>12822 / ATCC BAA-587 / NCTC 13253</strain>
    </source>
</reference>
<protein>
    <recommendedName>
        <fullName evidence="1">Trigger factor</fullName>
        <shortName evidence="1">TF</shortName>
        <ecNumber evidence="1">5.2.1.8</ecNumber>
    </recommendedName>
    <alternativeName>
        <fullName evidence="1">PPIase</fullName>
    </alternativeName>
</protein>
<evidence type="ECO:0000255" key="1">
    <source>
        <dbReference type="HAMAP-Rule" id="MF_00303"/>
    </source>
</evidence>
<organism>
    <name type="scientific">Bordetella parapertussis (strain 12822 / ATCC BAA-587 / NCTC 13253)</name>
    <dbReference type="NCBI Taxonomy" id="257311"/>
    <lineage>
        <taxon>Bacteria</taxon>
        <taxon>Pseudomonadati</taxon>
        <taxon>Pseudomonadota</taxon>
        <taxon>Betaproteobacteria</taxon>
        <taxon>Burkholderiales</taxon>
        <taxon>Alcaligenaceae</taxon>
        <taxon>Bordetella</taxon>
    </lineage>
</organism>
<keyword id="KW-0131">Cell cycle</keyword>
<keyword id="KW-0132">Cell division</keyword>
<keyword id="KW-0143">Chaperone</keyword>
<keyword id="KW-0963">Cytoplasm</keyword>
<keyword id="KW-0413">Isomerase</keyword>
<keyword id="KW-0697">Rotamase</keyword>
<gene>
    <name evidence="1" type="primary">tig</name>
    <name type="ordered locus">BPP2005</name>
</gene>